<protein>
    <recommendedName>
        <fullName evidence="1">Acetate kinase</fullName>
        <ecNumber evidence="1">2.7.2.1</ecNumber>
    </recommendedName>
    <alternativeName>
        <fullName evidence="1">Acetokinase</fullName>
    </alternativeName>
</protein>
<reference key="1">
    <citation type="journal article" date="2004" name="Proc. Natl. Acad. Sci. U.S.A.">
        <title>Comparison of the genome of the oral pathogen Treponema denticola with other spirochete genomes.</title>
        <authorList>
            <person name="Seshadri R."/>
            <person name="Myers G.S.A."/>
            <person name="Tettelin H."/>
            <person name="Eisen J.A."/>
            <person name="Heidelberg J.F."/>
            <person name="Dodson R.J."/>
            <person name="Davidsen T.M."/>
            <person name="DeBoy R.T."/>
            <person name="Fouts D.E."/>
            <person name="Haft D.H."/>
            <person name="Selengut J."/>
            <person name="Ren Q."/>
            <person name="Brinkac L.M."/>
            <person name="Madupu R."/>
            <person name="Kolonay J.F."/>
            <person name="Durkin S.A."/>
            <person name="Daugherty S.C."/>
            <person name="Shetty J."/>
            <person name="Shvartsbeyn A."/>
            <person name="Gebregeorgis E."/>
            <person name="Geer K."/>
            <person name="Tsegaye G."/>
            <person name="Malek J.A."/>
            <person name="Ayodeji B."/>
            <person name="Shatsman S."/>
            <person name="McLeod M.P."/>
            <person name="Smajs D."/>
            <person name="Howell J.K."/>
            <person name="Pal S."/>
            <person name="Amin A."/>
            <person name="Vashisth P."/>
            <person name="McNeill T.Z."/>
            <person name="Xiang Q."/>
            <person name="Sodergren E."/>
            <person name="Baca E."/>
            <person name="Weinstock G.M."/>
            <person name="Norris S.J."/>
            <person name="Fraser C.M."/>
            <person name="Paulsen I.T."/>
        </authorList>
    </citation>
    <scope>NUCLEOTIDE SEQUENCE [LARGE SCALE GENOMIC DNA]</scope>
    <source>
        <strain>ATCC 35405 / DSM 14222 / CIP 103919 / JCM 8153 / KCTC 15104</strain>
    </source>
</reference>
<accession>Q73P66</accession>
<proteinExistence type="inferred from homology"/>
<sequence>MKILVINCGSSSLKYQLIDMTNEDVLVKGLVERIGIEGSRIKHEKKGMDAVLIEEKMNDHKRAIQLVLEALIDKNHGVVKSMDEITAVGHRVVHGGEEFNKSVLLDDRVMAGIKECIDLAPLHNPANIMGIEACKALMPKTPMVAVFDTAFHQTMPAENYIYALPYEYYEKYKIRRYGFHGTSHRFVSEKASETLKNNSADFKVITCHLGNGSSLAAIKGGKCVDTSMGLTPLEGLVMGTRSGDLDPAILPFIMNKEKLSADEMSNVLNKKSGVFGISGVSSDFRDIETAAKEGNKRAQLALDVFCNRVRKYIASYAAQLGGVDALVFTAGIGENSIELREKICHGLEFLGVELDSEKNKVRGKLTDASKASSKVKVLIIPTNEELMIAKDTMALVK</sequence>
<name>ACKA_TREDE</name>
<keyword id="KW-0067">ATP-binding</keyword>
<keyword id="KW-0963">Cytoplasm</keyword>
<keyword id="KW-0418">Kinase</keyword>
<keyword id="KW-0460">Magnesium</keyword>
<keyword id="KW-0479">Metal-binding</keyword>
<keyword id="KW-0547">Nucleotide-binding</keyword>
<keyword id="KW-1185">Reference proteome</keyword>
<keyword id="KW-0808">Transferase</keyword>
<evidence type="ECO:0000255" key="1">
    <source>
        <dbReference type="HAMAP-Rule" id="MF_00020"/>
    </source>
</evidence>
<organism>
    <name type="scientific">Treponema denticola (strain ATCC 35405 / DSM 14222 / CIP 103919 / JCM 8153 / KCTC 15104)</name>
    <dbReference type="NCBI Taxonomy" id="243275"/>
    <lineage>
        <taxon>Bacteria</taxon>
        <taxon>Pseudomonadati</taxon>
        <taxon>Spirochaetota</taxon>
        <taxon>Spirochaetia</taxon>
        <taxon>Spirochaetales</taxon>
        <taxon>Treponemataceae</taxon>
        <taxon>Treponema</taxon>
    </lineage>
</organism>
<gene>
    <name evidence="1" type="primary">ackA</name>
    <name type="ordered locus">TDE_0933</name>
</gene>
<dbReference type="EC" id="2.7.2.1" evidence="1"/>
<dbReference type="EMBL" id="AE017226">
    <property type="protein sequence ID" value="AAS11424.1"/>
    <property type="molecule type" value="Genomic_DNA"/>
</dbReference>
<dbReference type="RefSeq" id="NP_971543.1">
    <property type="nucleotide sequence ID" value="NC_002967.9"/>
</dbReference>
<dbReference type="RefSeq" id="WP_010956840.1">
    <property type="nucleotide sequence ID" value="NC_002967.9"/>
</dbReference>
<dbReference type="SMR" id="Q73P66"/>
<dbReference type="STRING" id="243275.TDE_0933"/>
<dbReference type="PaxDb" id="243275-TDE_0933"/>
<dbReference type="GeneID" id="2740966"/>
<dbReference type="KEGG" id="tde:TDE_0933"/>
<dbReference type="PATRIC" id="fig|243275.7.peg.901"/>
<dbReference type="eggNOG" id="COG0282">
    <property type="taxonomic scope" value="Bacteria"/>
</dbReference>
<dbReference type="HOGENOM" id="CLU_020352_0_1_12"/>
<dbReference type="OrthoDB" id="9802453at2"/>
<dbReference type="UniPathway" id="UPA00340">
    <property type="reaction ID" value="UER00458"/>
</dbReference>
<dbReference type="Proteomes" id="UP000008212">
    <property type="component" value="Chromosome"/>
</dbReference>
<dbReference type="GO" id="GO:0005737">
    <property type="term" value="C:cytoplasm"/>
    <property type="evidence" value="ECO:0007669"/>
    <property type="project" value="UniProtKB-SubCell"/>
</dbReference>
<dbReference type="GO" id="GO:0008776">
    <property type="term" value="F:acetate kinase activity"/>
    <property type="evidence" value="ECO:0007669"/>
    <property type="project" value="UniProtKB-UniRule"/>
</dbReference>
<dbReference type="GO" id="GO:0005524">
    <property type="term" value="F:ATP binding"/>
    <property type="evidence" value="ECO:0007669"/>
    <property type="project" value="UniProtKB-KW"/>
</dbReference>
<dbReference type="GO" id="GO:0000287">
    <property type="term" value="F:magnesium ion binding"/>
    <property type="evidence" value="ECO:0007669"/>
    <property type="project" value="UniProtKB-UniRule"/>
</dbReference>
<dbReference type="GO" id="GO:0006083">
    <property type="term" value="P:acetate metabolic process"/>
    <property type="evidence" value="ECO:0007669"/>
    <property type="project" value="TreeGrafter"/>
</dbReference>
<dbReference type="GO" id="GO:0006085">
    <property type="term" value="P:acetyl-CoA biosynthetic process"/>
    <property type="evidence" value="ECO:0007669"/>
    <property type="project" value="UniProtKB-UniRule"/>
</dbReference>
<dbReference type="CDD" id="cd24010">
    <property type="entry name" value="ASKHA_NBD_AcK_PK"/>
    <property type="match status" value="1"/>
</dbReference>
<dbReference type="Gene3D" id="3.30.420.40">
    <property type="match status" value="2"/>
</dbReference>
<dbReference type="HAMAP" id="MF_00020">
    <property type="entry name" value="Acetate_kinase"/>
    <property type="match status" value="1"/>
</dbReference>
<dbReference type="InterPro" id="IPR004372">
    <property type="entry name" value="Ac/propionate_kinase"/>
</dbReference>
<dbReference type="InterPro" id="IPR000890">
    <property type="entry name" value="Aliphatic_acid_kin_short-chain"/>
</dbReference>
<dbReference type="InterPro" id="IPR023865">
    <property type="entry name" value="Aliphatic_acid_kinase_CS"/>
</dbReference>
<dbReference type="InterPro" id="IPR043129">
    <property type="entry name" value="ATPase_NBD"/>
</dbReference>
<dbReference type="NCBIfam" id="TIGR00016">
    <property type="entry name" value="ackA"/>
    <property type="match status" value="1"/>
</dbReference>
<dbReference type="PANTHER" id="PTHR21060">
    <property type="entry name" value="ACETATE KINASE"/>
    <property type="match status" value="1"/>
</dbReference>
<dbReference type="PANTHER" id="PTHR21060:SF15">
    <property type="entry name" value="ACETATE KINASE-RELATED"/>
    <property type="match status" value="1"/>
</dbReference>
<dbReference type="Pfam" id="PF00871">
    <property type="entry name" value="Acetate_kinase"/>
    <property type="match status" value="1"/>
</dbReference>
<dbReference type="PIRSF" id="PIRSF000722">
    <property type="entry name" value="Acetate_prop_kin"/>
    <property type="match status" value="1"/>
</dbReference>
<dbReference type="PRINTS" id="PR00471">
    <property type="entry name" value="ACETATEKNASE"/>
</dbReference>
<dbReference type="SUPFAM" id="SSF53067">
    <property type="entry name" value="Actin-like ATPase domain"/>
    <property type="match status" value="2"/>
</dbReference>
<dbReference type="PROSITE" id="PS01075">
    <property type="entry name" value="ACETATE_KINASE_1"/>
    <property type="match status" value="1"/>
</dbReference>
<dbReference type="PROSITE" id="PS01076">
    <property type="entry name" value="ACETATE_KINASE_2"/>
    <property type="match status" value="1"/>
</dbReference>
<feature type="chain" id="PRO_0000107633" description="Acetate kinase">
    <location>
        <begin position="1"/>
        <end position="397"/>
    </location>
</feature>
<feature type="active site" description="Proton donor/acceptor" evidence="1">
    <location>
        <position position="148"/>
    </location>
</feature>
<feature type="binding site" evidence="1">
    <location>
        <position position="7"/>
    </location>
    <ligand>
        <name>Mg(2+)</name>
        <dbReference type="ChEBI" id="CHEBI:18420"/>
    </ligand>
</feature>
<feature type="binding site" evidence="1">
    <location>
        <position position="14"/>
    </location>
    <ligand>
        <name>ATP</name>
        <dbReference type="ChEBI" id="CHEBI:30616"/>
    </ligand>
</feature>
<feature type="binding site" evidence="1">
    <location>
        <position position="91"/>
    </location>
    <ligand>
        <name>substrate</name>
    </ligand>
</feature>
<feature type="binding site" evidence="1">
    <location>
        <begin position="208"/>
        <end position="212"/>
    </location>
    <ligand>
        <name>ATP</name>
        <dbReference type="ChEBI" id="CHEBI:30616"/>
    </ligand>
</feature>
<feature type="binding site" evidence="1">
    <location>
        <begin position="283"/>
        <end position="285"/>
    </location>
    <ligand>
        <name>ATP</name>
        <dbReference type="ChEBI" id="CHEBI:30616"/>
    </ligand>
</feature>
<feature type="binding site" evidence="1">
    <location>
        <begin position="331"/>
        <end position="335"/>
    </location>
    <ligand>
        <name>ATP</name>
        <dbReference type="ChEBI" id="CHEBI:30616"/>
    </ligand>
</feature>
<feature type="binding site" evidence="1">
    <location>
        <position position="384"/>
    </location>
    <ligand>
        <name>Mg(2+)</name>
        <dbReference type="ChEBI" id="CHEBI:18420"/>
    </ligand>
</feature>
<feature type="site" description="Transition state stabilizer" evidence="1">
    <location>
        <position position="180"/>
    </location>
</feature>
<feature type="site" description="Transition state stabilizer" evidence="1">
    <location>
        <position position="241"/>
    </location>
</feature>
<comment type="function">
    <text evidence="1">Catalyzes the formation of acetyl phosphate from acetate and ATP. Can also catalyze the reverse reaction.</text>
</comment>
<comment type="catalytic activity">
    <reaction evidence="1">
        <text>acetate + ATP = acetyl phosphate + ADP</text>
        <dbReference type="Rhea" id="RHEA:11352"/>
        <dbReference type="ChEBI" id="CHEBI:22191"/>
        <dbReference type="ChEBI" id="CHEBI:30089"/>
        <dbReference type="ChEBI" id="CHEBI:30616"/>
        <dbReference type="ChEBI" id="CHEBI:456216"/>
        <dbReference type="EC" id="2.7.2.1"/>
    </reaction>
</comment>
<comment type="cofactor">
    <cofactor evidence="1">
        <name>Mg(2+)</name>
        <dbReference type="ChEBI" id="CHEBI:18420"/>
    </cofactor>
    <cofactor evidence="1">
        <name>Mn(2+)</name>
        <dbReference type="ChEBI" id="CHEBI:29035"/>
    </cofactor>
    <text evidence="1">Mg(2+). Can also accept Mn(2+).</text>
</comment>
<comment type="pathway">
    <text evidence="1">Metabolic intermediate biosynthesis; acetyl-CoA biosynthesis; acetyl-CoA from acetate: step 1/2.</text>
</comment>
<comment type="subunit">
    <text evidence="1">Homodimer.</text>
</comment>
<comment type="subcellular location">
    <subcellularLocation>
        <location evidence="1">Cytoplasm</location>
    </subcellularLocation>
</comment>
<comment type="similarity">
    <text evidence="1">Belongs to the acetokinase family.</text>
</comment>